<keyword id="KW-0030">Aminoacyl-tRNA synthetase</keyword>
<keyword id="KW-0067">ATP-binding</keyword>
<keyword id="KW-0963">Cytoplasm</keyword>
<keyword id="KW-0436">Ligase</keyword>
<keyword id="KW-0547">Nucleotide-binding</keyword>
<keyword id="KW-0648">Protein biosynthesis</keyword>
<keyword id="KW-1185">Reference proteome</keyword>
<name>SYS_SYNC1</name>
<organism>
    <name type="scientific">Syntrophotalea carbinolica (strain DSM 2380 / NBRC 103641 / GraBd1)</name>
    <name type="common">Pelobacter carbinolicus</name>
    <dbReference type="NCBI Taxonomy" id="338963"/>
    <lineage>
        <taxon>Bacteria</taxon>
        <taxon>Pseudomonadati</taxon>
        <taxon>Thermodesulfobacteriota</taxon>
        <taxon>Desulfuromonadia</taxon>
        <taxon>Desulfuromonadales</taxon>
        <taxon>Syntrophotaleaceae</taxon>
        <taxon>Syntrophotalea</taxon>
    </lineage>
</organism>
<accession>Q3A7Q8</accession>
<reference key="1">
    <citation type="submission" date="2005-10" db="EMBL/GenBank/DDBJ databases">
        <title>Complete sequence of Pelobacter carbinolicus DSM 2380.</title>
        <authorList>
            <person name="Copeland A."/>
            <person name="Lucas S."/>
            <person name="Lapidus A."/>
            <person name="Barry K."/>
            <person name="Detter J.C."/>
            <person name="Glavina T."/>
            <person name="Hammon N."/>
            <person name="Israni S."/>
            <person name="Pitluck S."/>
            <person name="Chertkov O."/>
            <person name="Schmutz J."/>
            <person name="Larimer F."/>
            <person name="Land M."/>
            <person name="Kyrpides N."/>
            <person name="Ivanova N."/>
            <person name="Richardson P."/>
        </authorList>
    </citation>
    <scope>NUCLEOTIDE SEQUENCE [LARGE SCALE GENOMIC DNA]</scope>
    <source>
        <strain>DSM 2380 / NBRC 103641 / GraBd1</strain>
    </source>
</reference>
<feature type="chain" id="PRO_1000019758" description="Serine--tRNA ligase">
    <location>
        <begin position="1"/>
        <end position="423"/>
    </location>
</feature>
<feature type="binding site" evidence="1">
    <location>
        <begin position="229"/>
        <end position="231"/>
    </location>
    <ligand>
        <name>L-serine</name>
        <dbReference type="ChEBI" id="CHEBI:33384"/>
    </ligand>
</feature>
<feature type="binding site" evidence="1">
    <location>
        <begin position="260"/>
        <end position="262"/>
    </location>
    <ligand>
        <name>ATP</name>
        <dbReference type="ChEBI" id="CHEBI:30616"/>
    </ligand>
</feature>
<feature type="binding site" evidence="1">
    <location>
        <position position="283"/>
    </location>
    <ligand>
        <name>L-serine</name>
        <dbReference type="ChEBI" id="CHEBI:33384"/>
    </ligand>
</feature>
<feature type="binding site" evidence="1">
    <location>
        <begin position="347"/>
        <end position="350"/>
    </location>
    <ligand>
        <name>ATP</name>
        <dbReference type="ChEBI" id="CHEBI:30616"/>
    </ligand>
</feature>
<feature type="binding site" evidence="1">
    <location>
        <position position="383"/>
    </location>
    <ligand>
        <name>L-serine</name>
        <dbReference type="ChEBI" id="CHEBI:33384"/>
    </ligand>
</feature>
<comment type="function">
    <text evidence="1">Catalyzes the attachment of serine to tRNA(Ser). Is also able to aminoacylate tRNA(Sec) with serine, to form the misacylated tRNA L-seryl-tRNA(Sec), which will be further converted into selenocysteinyl-tRNA(Sec).</text>
</comment>
<comment type="catalytic activity">
    <reaction evidence="1">
        <text>tRNA(Ser) + L-serine + ATP = L-seryl-tRNA(Ser) + AMP + diphosphate + H(+)</text>
        <dbReference type="Rhea" id="RHEA:12292"/>
        <dbReference type="Rhea" id="RHEA-COMP:9669"/>
        <dbReference type="Rhea" id="RHEA-COMP:9703"/>
        <dbReference type="ChEBI" id="CHEBI:15378"/>
        <dbReference type="ChEBI" id="CHEBI:30616"/>
        <dbReference type="ChEBI" id="CHEBI:33019"/>
        <dbReference type="ChEBI" id="CHEBI:33384"/>
        <dbReference type="ChEBI" id="CHEBI:78442"/>
        <dbReference type="ChEBI" id="CHEBI:78533"/>
        <dbReference type="ChEBI" id="CHEBI:456215"/>
        <dbReference type="EC" id="6.1.1.11"/>
    </reaction>
</comment>
<comment type="catalytic activity">
    <reaction evidence="1">
        <text>tRNA(Sec) + L-serine + ATP = L-seryl-tRNA(Sec) + AMP + diphosphate + H(+)</text>
        <dbReference type="Rhea" id="RHEA:42580"/>
        <dbReference type="Rhea" id="RHEA-COMP:9742"/>
        <dbReference type="Rhea" id="RHEA-COMP:10128"/>
        <dbReference type="ChEBI" id="CHEBI:15378"/>
        <dbReference type="ChEBI" id="CHEBI:30616"/>
        <dbReference type="ChEBI" id="CHEBI:33019"/>
        <dbReference type="ChEBI" id="CHEBI:33384"/>
        <dbReference type="ChEBI" id="CHEBI:78442"/>
        <dbReference type="ChEBI" id="CHEBI:78533"/>
        <dbReference type="ChEBI" id="CHEBI:456215"/>
        <dbReference type="EC" id="6.1.1.11"/>
    </reaction>
</comment>
<comment type="pathway">
    <text evidence="1">Aminoacyl-tRNA biosynthesis; selenocysteinyl-tRNA(Sec) biosynthesis; L-seryl-tRNA(Sec) from L-serine and tRNA(Sec): step 1/1.</text>
</comment>
<comment type="subunit">
    <text evidence="1">Homodimer. The tRNA molecule binds across the dimer.</text>
</comment>
<comment type="subcellular location">
    <subcellularLocation>
        <location evidence="1">Cytoplasm</location>
    </subcellularLocation>
</comment>
<comment type="domain">
    <text evidence="1">Consists of two distinct domains, a catalytic core and a N-terminal extension that is involved in tRNA binding.</text>
</comment>
<comment type="similarity">
    <text evidence="1">Belongs to the class-II aminoacyl-tRNA synthetase family. Type-1 seryl-tRNA synthetase subfamily.</text>
</comment>
<evidence type="ECO:0000255" key="1">
    <source>
        <dbReference type="HAMAP-Rule" id="MF_00176"/>
    </source>
</evidence>
<sequence length="423" mass="47852">MLDLKFVRDHFAEAEQRLATRGGAVDLSAFTDLDARRRTLLGESESLKAEKNQVSALIGKTKDKSQVQGEIARMKDVSVRIKELDEELKQVEGDLRTLLMTLPNLPHEDCPVGTSEDDNKEVRRWGQVPEFDFEAQSHWDIGERLDILDFERAGKLAGARFAIYKGAGARLERALINFMLDLHTGEHKYVEILPPLMVNRDTMTGTGQLPKFESDLFHLDDPDFFLIPTAEVPVTNIHRDEILADGDLPVCYAAYTPCFRKEAGSHGRDTRGLIRMHQFNKVELVKFARPEESDQELLKLLDNAEEVLRRLKLPYRVVDLCTGDIGFSAARTFDIEVWLPGQQTFREISSCSNFRDFQARRAAIRFRREEKGKPELVHTLNGSGLAVGRTLVAILENYQQEDGSVVIPEALRPYMGGVEKISA</sequence>
<gene>
    <name evidence="1" type="primary">serS</name>
    <name type="ordered locus">Pcar_0326</name>
</gene>
<dbReference type="EC" id="6.1.1.11" evidence="1"/>
<dbReference type="EMBL" id="CP000142">
    <property type="protein sequence ID" value="ABA87586.1"/>
    <property type="molecule type" value="Genomic_DNA"/>
</dbReference>
<dbReference type="RefSeq" id="WP_011339998.1">
    <property type="nucleotide sequence ID" value="NC_007498.2"/>
</dbReference>
<dbReference type="SMR" id="Q3A7Q8"/>
<dbReference type="STRING" id="338963.Pcar_0326"/>
<dbReference type="KEGG" id="pca:Pcar_0326"/>
<dbReference type="eggNOG" id="COG0172">
    <property type="taxonomic scope" value="Bacteria"/>
</dbReference>
<dbReference type="HOGENOM" id="CLU_023797_1_1_7"/>
<dbReference type="OrthoDB" id="9804647at2"/>
<dbReference type="UniPathway" id="UPA00906">
    <property type="reaction ID" value="UER00895"/>
</dbReference>
<dbReference type="Proteomes" id="UP000002534">
    <property type="component" value="Chromosome"/>
</dbReference>
<dbReference type="GO" id="GO:0005737">
    <property type="term" value="C:cytoplasm"/>
    <property type="evidence" value="ECO:0007669"/>
    <property type="project" value="UniProtKB-SubCell"/>
</dbReference>
<dbReference type="GO" id="GO:0005524">
    <property type="term" value="F:ATP binding"/>
    <property type="evidence" value="ECO:0007669"/>
    <property type="project" value="UniProtKB-UniRule"/>
</dbReference>
<dbReference type="GO" id="GO:0004828">
    <property type="term" value="F:serine-tRNA ligase activity"/>
    <property type="evidence" value="ECO:0007669"/>
    <property type="project" value="UniProtKB-UniRule"/>
</dbReference>
<dbReference type="GO" id="GO:0016260">
    <property type="term" value="P:selenocysteine biosynthetic process"/>
    <property type="evidence" value="ECO:0007669"/>
    <property type="project" value="UniProtKB-UniRule"/>
</dbReference>
<dbReference type="GO" id="GO:0006434">
    <property type="term" value="P:seryl-tRNA aminoacylation"/>
    <property type="evidence" value="ECO:0007669"/>
    <property type="project" value="UniProtKB-UniRule"/>
</dbReference>
<dbReference type="CDD" id="cd00770">
    <property type="entry name" value="SerRS_core"/>
    <property type="match status" value="1"/>
</dbReference>
<dbReference type="Gene3D" id="3.30.930.10">
    <property type="entry name" value="Bira Bifunctional Protein, Domain 2"/>
    <property type="match status" value="1"/>
</dbReference>
<dbReference type="Gene3D" id="1.10.287.40">
    <property type="entry name" value="Serine-tRNA synthetase, tRNA binding domain"/>
    <property type="match status" value="1"/>
</dbReference>
<dbReference type="HAMAP" id="MF_00176">
    <property type="entry name" value="Ser_tRNA_synth_type1"/>
    <property type="match status" value="1"/>
</dbReference>
<dbReference type="InterPro" id="IPR002314">
    <property type="entry name" value="aa-tRNA-synt_IIb"/>
</dbReference>
<dbReference type="InterPro" id="IPR006195">
    <property type="entry name" value="aa-tRNA-synth_II"/>
</dbReference>
<dbReference type="InterPro" id="IPR045864">
    <property type="entry name" value="aa-tRNA-synth_II/BPL/LPL"/>
</dbReference>
<dbReference type="InterPro" id="IPR002317">
    <property type="entry name" value="Ser-tRNA-ligase_type_1"/>
</dbReference>
<dbReference type="InterPro" id="IPR015866">
    <property type="entry name" value="Ser-tRNA-synth_1_N"/>
</dbReference>
<dbReference type="InterPro" id="IPR042103">
    <property type="entry name" value="SerRS_1_N_sf"/>
</dbReference>
<dbReference type="InterPro" id="IPR033729">
    <property type="entry name" value="SerRS_core"/>
</dbReference>
<dbReference type="InterPro" id="IPR010978">
    <property type="entry name" value="tRNA-bd_arm"/>
</dbReference>
<dbReference type="NCBIfam" id="TIGR00414">
    <property type="entry name" value="serS"/>
    <property type="match status" value="1"/>
</dbReference>
<dbReference type="PANTHER" id="PTHR43697:SF1">
    <property type="entry name" value="SERINE--TRNA LIGASE"/>
    <property type="match status" value="1"/>
</dbReference>
<dbReference type="PANTHER" id="PTHR43697">
    <property type="entry name" value="SERYL-TRNA SYNTHETASE"/>
    <property type="match status" value="1"/>
</dbReference>
<dbReference type="Pfam" id="PF02403">
    <property type="entry name" value="Seryl_tRNA_N"/>
    <property type="match status" value="1"/>
</dbReference>
<dbReference type="Pfam" id="PF00587">
    <property type="entry name" value="tRNA-synt_2b"/>
    <property type="match status" value="1"/>
</dbReference>
<dbReference type="PIRSF" id="PIRSF001529">
    <property type="entry name" value="Ser-tRNA-synth_IIa"/>
    <property type="match status" value="1"/>
</dbReference>
<dbReference type="PRINTS" id="PR00981">
    <property type="entry name" value="TRNASYNTHSER"/>
</dbReference>
<dbReference type="SUPFAM" id="SSF55681">
    <property type="entry name" value="Class II aaRS and biotin synthetases"/>
    <property type="match status" value="1"/>
</dbReference>
<dbReference type="SUPFAM" id="SSF46589">
    <property type="entry name" value="tRNA-binding arm"/>
    <property type="match status" value="1"/>
</dbReference>
<dbReference type="PROSITE" id="PS50862">
    <property type="entry name" value="AA_TRNA_LIGASE_II"/>
    <property type="match status" value="1"/>
</dbReference>
<proteinExistence type="inferred from homology"/>
<protein>
    <recommendedName>
        <fullName evidence="1">Serine--tRNA ligase</fullName>
        <ecNumber evidence="1">6.1.1.11</ecNumber>
    </recommendedName>
    <alternativeName>
        <fullName evidence="1">Seryl-tRNA synthetase</fullName>
        <shortName evidence="1">SerRS</shortName>
    </alternativeName>
    <alternativeName>
        <fullName evidence="1">Seryl-tRNA(Ser/Sec) synthetase</fullName>
    </alternativeName>
</protein>